<proteinExistence type="inferred from homology"/>
<feature type="chain" id="PRO_0000296840" description="DNA-directed RNA polymerase subunit alpha">
    <location>
        <begin position="1"/>
        <end position="333"/>
    </location>
</feature>
<feature type="region of interest" description="Alpha N-terminal domain (alpha-NTD)" evidence="1">
    <location>
        <begin position="1"/>
        <end position="251"/>
    </location>
</feature>
<feature type="region of interest" description="Alpha C-terminal domain (alpha-CTD)" evidence="1">
    <location>
        <begin position="272"/>
        <end position="333"/>
    </location>
</feature>
<keyword id="KW-0240">DNA-directed RNA polymerase</keyword>
<keyword id="KW-0548">Nucleotidyltransferase</keyword>
<keyword id="KW-1185">Reference proteome</keyword>
<keyword id="KW-0804">Transcription</keyword>
<keyword id="KW-0808">Transferase</keyword>
<dbReference type="EC" id="2.7.7.6" evidence="1"/>
<dbReference type="EMBL" id="AE017245">
    <property type="protein sequence ID" value="AAZ43981.1"/>
    <property type="molecule type" value="Genomic_DNA"/>
</dbReference>
<dbReference type="RefSeq" id="WP_011283710.1">
    <property type="nucleotide sequence ID" value="NC_007294.1"/>
</dbReference>
<dbReference type="SMR" id="Q4A5J0"/>
<dbReference type="STRING" id="262723.MS53_0574"/>
<dbReference type="KEGG" id="msy:MS53_0574"/>
<dbReference type="eggNOG" id="COG0202">
    <property type="taxonomic scope" value="Bacteria"/>
</dbReference>
<dbReference type="HOGENOM" id="CLU_053084_0_1_14"/>
<dbReference type="OrthoDB" id="9805706at2"/>
<dbReference type="Proteomes" id="UP000000549">
    <property type="component" value="Chromosome"/>
</dbReference>
<dbReference type="GO" id="GO:0005737">
    <property type="term" value="C:cytoplasm"/>
    <property type="evidence" value="ECO:0007669"/>
    <property type="project" value="UniProtKB-ARBA"/>
</dbReference>
<dbReference type="GO" id="GO:0000428">
    <property type="term" value="C:DNA-directed RNA polymerase complex"/>
    <property type="evidence" value="ECO:0007669"/>
    <property type="project" value="UniProtKB-KW"/>
</dbReference>
<dbReference type="GO" id="GO:0003677">
    <property type="term" value="F:DNA binding"/>
    <property type="evidence" value="ECO:0007669"/>
    <property type="project" value="UniProtKB-UniRule"/>
</dbReference>
<dbReference type="GO" id="GO:0003899">
    <property type="term" value="F:DNA-directed RNA polymerase activity"/>
    <property type="evidence" value="ECO:0007669"/>
    <property type="project" value="UniProtKB-UniRule"/>
</dbReference>
<dbReference type="GO" id="GO:0046983">
    <property type="term" value="F:protein dimerization activity"/>
    <property type="evidence" value="ECO:0007669"/>
    <property type="project" value="InterPro"/>
</dbReference>
<dbReference type="GO" id="GO:0006351">
    <property type="term" value="P:DNA-templated transcription"/>
    <property type="evidence" value="ECO:0007669"/>
    <property type="project" value="UniProtKB-UniRule"/>
</dbReference>
<dbReference type="CDD" id="cd06928">
    <property type="entry name" value="RNAP_alpha_NTD"/>
    <property type="match status" value="1"/>
</dbReference>
<dbReference type="Gene3D" id="1.10.150.20">
    <property type="entry name" value="5' to 3' exonuclease, C-terminal subdomain"/>
    <property type="match status" value="1"/>
</dbReference>
<dbReference type="Gene3D" id="2.170.120.12">
    <property type="entry name" value="DNA-directed RNA polymerase, insert domain"/>
    <property type="match status" value="1"/>
</dbReference>
<dbReference type="Gene3D" id="3.30.1360.10">
    <property type="entry name" value="RNA polymerase, RBP11-like subunit"/>
    <property type="match status" value="1"/>
</dbReference>
<dbReference type="HAMAP" id="MF_00059">
    <property type="entry name" value="RNApol_bact_RpoA"/>
    <property type="match status" value="1"/>
</dbReference>
<dbReference type="InterPro" id="IPR011262">
    <property type="entry name" value="DNA-dir_RNA_pol_insert"/>
</dbReference>
<dbReference type="InterPro" id="IPR011263">
    <property type="entry name" value="DNA-dir_RNA_pol_RpoA/D/Rpb3"/>
</dbReference>
<dbReference type="InterPro" id="IPR011773">
    <property type="entry name" value="DNA-dir_RpoA"/>
</dbReference>
<dbReference type="InterPro" id="IPR036603">
    <property type="entry name" value="RBP11-like"/>
</dbReference>
<dbReference type="InterPro" id="IPR011260">
    <property type="entry name" value="RNAP_asu_C"/>
</dbReference>
<dbReference type="InterPro" id="IPR036643">
    <property type="entry name" value="RNApol_insert_sf"/>
</dbReference>
<dbReference type="NCBIfam" id="NF003519">
    <property type="entry name" value="PRK05182.2-5"/>
    <property type="match status" value="1"/>
</dbReference>
<dbReference type="NCBIfam" id="TIGR02027">
    <property type="entry name" value="rpoA"/>
    <property type="match status" value="1"/>
</dbReference>
<dbReference type="Pfam" id="PF01000">
    <property type="entry name" value="RNA_pol_A_bac"/>
    <property type="match status" value="1"/>
</dbReference>
<dbReference type="Pfam" id="PF03118">
    <property type="entry name" value="RNA_pol_A_CTD"/>
    <property type="match status" value="1"/>
</dbReference>
<dbReference type="Pfam" id="PF01193">
    <property type="entry name" value="RNA_pol_L"/>
    <property type="match status" value="1"/>
</dbReference>
<dbReference type="SMART" id="SM00662">
    <property type="entry name" value="RPOLD"/>
    <property type="match status" value="1"/>
</dbReference>
<dbReference type="SUPFAM" id="SSF47789">
    <property type="entry name" value="C-terminal domain of RNA polymerase alpha subunit"/>
    <property type="match status" value="1"/>
</dbReference>
<dbReference type="SUPFAM" id="SSF56553">
    <property type="entry name" value="Insert subdomain of RNA polymerase alpha subunit"/>
    <property type="match status" value="1"/>
</dbReference>
<dbReference type="SUPFAM" id="SSF55257">
    <property type="entry name" value="RBP11-like subunits of RNA polymerase"/>
    <property type="match status" value="1"/>
</dbReference>
<name>RPOA_MYCS5</name>
<organism>
    <name type="scientific">Mycoplasmopsis synoviae (strain 53)</name>
    <name type="common">Mycoplasma synoviae</name>
    <dbReference type="NCBI Taxonomy" id="262723"/>
    <lineage>
        <taxon>Bacteria</taxon>
        <taxon>Bacillati</taxon>
        <taxon>Mycoplasmatota</taxon>
        <taxon>Mycoplasmoidales</taxon>
        <taxon>Metamycoplasmataceae</taxon>
        <taxon>Mycoplasmopsis</taxon>
    </lineage>
</organism>
<comment type="function">
    <text evidence="1">DNA-dependent RNA polymerase catalyzes the transcription of DNA into RNA using the four ribonucleoside triphosphates as substrates.</text>
</comment>
<comment type="catalytic activity">
    <reaction evidence="1">
        <text>RNA(n) + a ribonucleoside 5'-triphosphate = RNA(n+1) + diphosphate</text>
        <dbReference type="Rhea" id="RHEA:21248"/>
        <dbReference type="Rhea" id="RHEA-COMP:14527"/>
        <dbReference type="Rhea" id="RHEA-COMP:17342"/>
        <dbReference type="ChEBI" id="CHEBI:33019"/>
        <dbReference type="ChEBI" id="CHEBI:61557"/>
        <dbReference type="ChEBI" id="CHEBI:140395"/>
        <dbReference type="EC" id="2.7.7.6"/>
    </reaction>
</comment>
<comment type="subunit">
    <text evidence="1">Homodimer. The RNAP catalytic core consists of 2 alpha, 1 beta, 1 beta' and 1 omega subunit. When a sigma factor is associated with the core the holoenzyme is formed, which can initiate transcription.</text>
</comment>
<comment type="domain">
    <text evidence="1">The N-terminal domain is essential for RNAP assembly and basal transcription, whereas the C-terminal domain is involved in interaction with transcriptional regulators and with upstream promoter elements.</text>
</comment>
<comment type="similarity">
    <text evidence="1">Belongs to the RNA polymerase alpha chain family.</text>
</comment>
<gene>
    <name evidence="1" type="primary">rpoA</name>
    <name type="ordered locus">MS53_0574</name>
</gene>
<reference key="1">
    <citation type="journal article" date="2005" name="J. Bacteriol.">
        <title>Swine and poultry pathogens: the complete genome sequences of two strains of Mycoplasma hyopneumoniae and a strain of Mycoplasma synoviae.</title>
        <authorList>
            <person name="Vasconcelos A.T.R."/>
            <person name="Ferreira H.B."/>
            <person name="Bizarro C.V."/>
            <person name="Bonatto S.L."/>
            <person name="Carvalho M.O."/>
            <person name="Pinto P.M."/>
            <person name="Almeida D.F."/>
            <person name="Almeida L.G.P."/>
            <person name="Almeida R."/>
            <person name="Alves-Junior L."/>
            <person name="Assuncao E.N."/>
            <person name="Azevedo V.A.C."/>
            <person name="Bogo M.R."/>
            <person name="Brigido M.M."/>
            <person name="Brocchi M."/>
            <person name="Burity H.A."/>
            <person name="Camargo A.A."/>
            <person name="Camargo S.S."/>
            <person name="Carepo M.S."/>
            <person name="Carraro D.M."/>
            <person name="de Mattos Cascardo J.C."/>
            <person name="Castro L.A."/>
            <person name="Cavalcanti G."/>
            <person name="Chemale G."/>
            <person name="Collevatti R.G."/>
            <person name="Cunha C.W."/>
            <person name="Dallagiovanna B."/>
            <person name="Dambros B.P."/>
            <person name="Dellagostin O.A."/>
            <person name="Falcao C."/>
            <person name="Fantinatti-Garboggini F."/>
            <person name="Felipe M.S.S."/>
            <person name="Fiorentin L."/>
            <person name="Franco G.R."/>
            <person name="Freitas N.S.A."/>
            <person name="Frias D."/>
            <person name="Grangeiro T.B."/>
            <person name="Grisard E.C."/>
            <person name="Guimaraes C.T."/>
            <person name="Hungria M."/>
            <person name="Jardim S.N."/>
            <person name="Krieger M.A."/>
            <person name="Laurino J.P."/>
            <person name="Lima L.F.A."/>
            <person name="Lopes M.I."/>
            <person name="Loreto E.L.S."/>
            <person name="Madeira H.M.F."/>
            <person name="Manfio G.P."/>
            <person name="Maranhao A.Q."/>
            <person name="Martinkovics C.T."/>
            <person name="Medeiros S.R.B."/>
            <person name="Moreira M.A.M."/>
            <person name="Neiva M."/>
            <person name="Ramalho-Neto C.E."/>
            <person name="Nicolas M.F."/>
            <person name="Oliveira S.C."/>
            <person name="Paixao R.F.C."/>
            <person name="Pedrosa F.O."/>
            <person name="Pena S.D.J."/>
            <person name="Pereira M."/>
            <person name="Pereira-Ferrari L."/>
            <person name="Piffer I."/>
            <person name="Pinto L.S."/>
            <person name="Potrich D.P."/>
            <person name="Salim A.C.M."/>
            <person name="Santos F.R."/>
            <person name="Schmitt R."/>
            <person name="Schneider M.P.C."/>
            <person name="Schrank A."/>
            <person name="Schrank I.S."/>
            <person name="Schuck A.F."/>
            <person name="Seuanez H.N."/>
            <person name="Silva D.W."/>
            <person name="Silva R."/>
            <person name="Silva S.C."/>
            <person name="Soares C.M.A."/>
            <person name="Souza K.R.L."/>
            <person name="Souza R.C."/>
            <person name="Staats C.C."/>
            <person name="Steffens M.B.R."/>
            <person name="Teixeira S.M.R."/>
            <person name="Urmenyi T.P."/>
            <person name="Vainstein M.H."/>
            <person name="Zuccherato L.W."/>
            <person name="Simpson A.J.G."/>
            <person name="Zaha A."/>
        </authorList>
    </citation>
    <scope>NUCLEOTIDE SEQUENCE [LARGE SCALE GENOMIC DNA]</scope>
    <source>
        <strain>53</strain>
    </source>
</reference>
<accession>Q4A5J0</accession>
<sequence length="333" mass="37688">MEKLTKIKHRIIPAKDSQNNSYKKVLKIKGLERGFGNTLAVALRRILLSNITGIAPFCVRIEGVEHEFTALEKVSEDIVTILSNLKKVVLNYDEDYVKDNQIIKLSLNANEDNRITSNHLTVTNAPRVEVQNKDVEIATLSKPGVLKLEMFLRAGRGYVDFEDNKKFIEEKEKELKELSSLSKGAFIAMDSVFSPVVNVAWKVTELNTASLKIEEQLELELETKLGVTPESAIKLACKILVAHFQTIGDLTDLDSDEIFQSEKQSLEKEEDDMEIRLLNLSMRSQNALAKSGIKTLNELASYPIEKLKEIKNLGEKSREEIIRKLNEYGKLKN</sequence>
<protein>
    <recommendedName>
        <fullName evidence="1">DNA-directed RNA polymerase subunit alpha</fullName>
        <shortName evidence="1">RNAP subunit alpha</shortName>
        <ecNumber evidence="1">2.7.7.6</ecNumber>
    </recommendedName>
    <alternativeName>
        <fullName evidence="1">RNA polymerase subunit alpha</fullName>
    </alternativeName>
    <alternativeName>
        <fullName evidence="1">Transcriptase subunit alpha</fullName>
    </alternativeName>
</protein>
<evidence type="ECO:0000255" key="1">
    <source>
        <dbReference type="HAMAP-Rule" id="MF_00059"/>
    </source>
</evidence>